<gene>
    <name evidence="1" type="primary">aroK</name>
    <name type="ordered locus">BDI_2809</name>
</gene>
<organism>
    <name type="scientific">Parabacteroides distasonis (strain ATCC 8503 / DSM 20701 / CIP 104284 / JCM 5825 / NCTC 11152)</name>
    <dbReference type="NCBI Taxonomy" id="435591"/>
    <lineage>
        <taxon>Bacteria</taxon>
        <taxon>Pseudomonadati</taxon>
        <taxon>Bacteroidota</taxon>
        <taxon>Bacteroidia</taxon>
        <taxon>Bacteroidales</taxon>
        <taxon>Tannerellaceae</taxon>
        <taxon>Parabacteroides</taxon>
    </lineage>
</organism>
<evidence type="ECO:0000255" key="1">
    <source>
        <dbReference type="HAMAP-Rule" id="MF_00109"/>
    </source>
</evidence>
<dbReference type="EC" id="2.7.1.71" evidence="1"/>
<dbReference type="EMBL" id="CP000140">
    <property type="protein sequence ID" value="ABR44522.1"/>
    <property type="molecule type" value="Genomic_DNA"/>
</dbReference>
<dbReference type="RefSeq" id="WP_005860724.1">
    <property type="nucleotide sequence ID" value="NZ_LR215978.1"/>
</dbReference>
<dbReference type="SMR" id="A6LFQ8"/>
<dbReference type="STRING" id="435591.BDI_2809"/>
<dbReference type="PaxDb" id="435591-BDI_2809"/>
<dbReference type="KEGG" id="pdi:BDI_2809"/>
<dbReference type="eggNOG" id="COG0703">
    <property type="taxonomic scope" value="Bacteria"/>
</dbReference>
<dbReference type="HOGENOM" id="CLU_057607_4_0_10"/>
<dbReference type="BioCyc" id="PDIS435591:G1G5A-2884-MONOMER"/>
<dbReference type="UniPathway" id="UPA00053">
    <property type="reaction ID" value="UER00088"/>
</dbReference>
<dbReference type="Proteomes" id="UP000000566">
    <property type="component" value="Chromosome"/>
</dbReference>
<dbReference type="GO" id="GO:0005829">
    <property type="term" value="C:cytosol"/>
    <property type="evidence" value="ECO:0007669"/>
    <property type="project" value="TreeGrafter"/>
</dbReference>
<dbReference type="GO" id="GO:0005524">
    <property type="term" value="F:ATP binding"/>
    <property type="evidence" value="ECO:0007669"/>
    <property type="project" value="UniProtKB-UniRule"/>
</dbReference>
<dbReference type="GO" id="GO:0000287">
    <property type="term" value="F:magnesium ion binding"/>
    <property type="evidence" value="ECO:0007669"/>
    <property type="project" value="UniProtKB-UniRule"/>
</dbReference>
<dbReference type="GO" id="GO:0004765">
    <property type="term" value="F:shikimate kinase activity"/>
    <property type="evidence" value="ECO:0007669"/>
    <property type="project" value="UniProtKB-UniRule"/>
</dbReference>
<dbReference type="GO" id="GO:0008652">
    <property type="term" value="P:amino acid biosynthetic process"/>
    <property type="evidence" value="ECO:0007669"/>
    <property type="project" value="UniProtKB-KW"/>
</dbReference>
<dbReference type="GO" id="GO:0009073">
    <property type="term" value="P:aromatic amino acid family biosynthetic process"/>
    <property type="evidence" value="ECO:0007669"/>
    <property type="project" value="UniProtKB-KW"/>
</dbReference>
<dbReference type="GO" id="GO:0009423">
    <property type="term" value="P:chorismate biosynthetic process"/>
    <property type="evidence" value="ECO:0007669"/>
    <property type="project" value="UniProtKB-UniRule"/>
</dbReference>
<dbReference type="CDD" id="cd00464">
    <property type="entry name" value="SK"/>
    <property type="match status" value="1"/>
</dbReference>
<dbReference type="Gene3D" id="3.40.50.300">
    <property type="entry name" value="P-loop containing nucleotide triphosphate hydrolases"/>
    <property type="match status" value="1"/>
</dbReference>
<dbReference type="HAMAP" id="MF_00109">
    <property type="entry name" value="Shikimate_kinase"/>
    <property type="match status" value="1"/>
</dbReference>
<dbReference type="InterPro" id="IPR027417">
    <property type="entry name" value="P-loop_NTPase"/>
</dbReference>
<dbReference type="InterPro" id="IPR031322">
    <property type="entry name" value="Shikimate/glucono_kinase"/>
</dbReference>
<dbReference type="InterPro" id="IPR000623">
    <property type="entry name" value="Shikimate_kinase/TSH1"/>
</dbReference>
<dbReference type="NCBIfam" id="NF010555">
    <property type="entry name" value="PRK13949.1"/>
    <property type="match status" value="1"/>
</dbReference>
<dbReference type="PANTHER" id="PTHR21087">
    <property type="entry name" value="SHIKIMATE KINASE"/>
    <property type="match status" value="1"/>
</dbReference>
<dbReference type="PANTHER" id="PTHR21087:SF16">
    <property type="entry name" value="SHIKIMATE KINASE 1, CHLOROPLASTIC"/>
    <property type="match status" value="1"/>
</dbReference>
<dbReference type="Pfam" id="PF01202">
    <property type="entry name" value="SKI"/>
    <property type="match status" value="1"/>
</dbReference>
<dbReference type="PRINTS" id="PR01100">
    <property type="entry name" value="SHIKIMTKNASE"/>
</dbReference>
<dbReference type="SUPFAM" id="SSF52540">
    <property type="entry name" value="P-loop containing nucleoside triphosphate hydrolases"/>
    <property type="match status" value="1"/>
</dbReference>
<protein>
    <recommendedName>
        <fullName evidence="1">Shikimate kinase</fullName>
        <shortName evidence="1">SK</shortName>
        <ecNumber evidence="1">2.7.1.71</ecNumber>
    </recommendedName>
</protein>
<accession>A6LFQ8</accession>
<comment type="function">
    <text evidence="1">Catalyzes the specific phosphorylation of the 3-hydroxyl group of shikimic acid using ATP as a cosubstrate.</text>
</comment>
<comment type="catalytic activity">
    <reaction evidence="1">
        <text>shikimate + ATP = 3-phosphoshikimate + ADP + H(+)</text>
        <dbReference type="Rhea" id="RHEA:13121"/>
        <dbReference type="ChEBI" id="CHEBI:15378"/>
        <dbReference type="ChEBI" id="CHEBI:30616"/>
        <dbReference type="ChEBI" id="CHEBI:36208"/>
        <dbReference type="ChEBI" id="CHEBI:145989"/>
        <dbReference type="ChEBI" id="CHEBI:456216"/>
        <dbReference type="EC" id="2.7.1.71"/>
    </reaction>
</comment>
<comment type="cofactor">
    <cofactor evidence="1">
        <name>Mg(2+)</name>
        <dbReference type="ChEBI" id="CHEBI:18420"/>
    </cofactor>
    <text evidence="1">Binds 1 Mg(2+) ion per subunit.</text>
</comment>
<comment type="pathway">
    <text evidence="1">Metabolic intermediate biosynthesis; chorismate biosynthesis; chorismate from D-erythrose 4-phosphate and phosphoenolpyruvate: step 5/7.</text>
</comment>
<comment type="subunit">
    <text evidence="1">Monomer.</text>
</comment>
<comment type="subcellular location">
    <subcellularLocation>
        <location evidence="1">Cytoplasm</location>
    </subcellularLocation>
</comment>
<comment type="similarity">
    <text evidence="1">Belongs to the shikimate kinase family.</text>
</comment>
<keyword id="KW-0028">Amino-acid biosynthesis</keyword>
<keyword id="KW-0057">Aromatic amino acid biosynthesis</keyword>
<keyword id="KW-0067">ATP-binding</keyword>
<keyword id="KW-0963">Cytoplasm</keyword>
<keyword id="KW-0418">Kinase</keyword>
<keyword id="KW-0460">Magnesium</keyword>
<keyword id="KW-0479">Metal-binding</keyword>
<keyword id="KW-0547">Nucleotide-binding</keyword>
<keyword id="KW-1185">Reference proteome</keyword>
<keyword id="KW-0808">Transferase</keyword>
<feature type="chain" id="PRO_1000094401" description="Shikimate kinase">
    <location>
        <begin position="1"/>
        <end position="173"/>
    </location>
</feature>
<feature type="binding site" evidence="1">
    <location>
        <begin position="11"/>
        <end position="16"/>
    </location>
    <ligand>
        <name>ATP</name>
        <dbReference type="ChEBI" id="CHEBI:30616"/>
    </ligand>
</feature>
<feature type="binding site" evidence="1">
    <location>
        <position position="15"/>
    </location>
    <ligand>
        <name>Mg(2+)</name>
        <dbReference type="ChEBI" id="CHEBI:18420"/>
    </ligand>
</feature>
<feature type="binding site" evidence="1">
    <location>
        <position position="33"/>
    </location>
    <ligand>
        <name>substrate</name>
    </ligand>
</feature>
<feature type="binding site" evidence="1">
    <location>
        <position position="57"/>
    </location>
    <ligand>
        <name>substrate</name>
    </ligand>
</feature>
<feature type="binding site" evidence="1">
    <location>
        <position position="79"/>
    </location>
    <ligand>
        <name>substrate</name>
    </ligand>
</feature>
<feature type="binding site" evidence="1">
    <location>
        <position position="118"/>
    </location>
    <ligand>
        <name>ATP</name>
        <dbReference type="ChEBI" id="CHEBI:30616"/>
    </ligand>
</feature>
<feature type="binding site" evidence="1">
    <location>
        <position position="140"/>
    </location>
    <ligand>
        <name>substrate</name>
    </ligand>
</feature>
<reference key="1">
    <citation type="journal article" date="2007" name="PLoS Biol.">
        <title>Evolution of symbiotic bacteria in the distal human intestine.</title>
        <authorList>
            <person name="Xu J."/>
            <person name="Mahowald M.A."/>
            <person name="Ley R.E."/>
            <person name="Lozupone C.A."/>
            <person name="Hamady M."/>
            <person name="Martens E.C."/>
            <person name="Henrissat B."/>
            <person name="Coutinho P.M."/>
            <person name="Minx P."/>
            <person name="Latreille P."/>
            <person name="Cordum H."/>
            <person name="Van Brunt A."/>
            <person name="Kim K."/>
            <person name="Fulton R.S."/>
            <person name="Fulton L.A."/>
            <person name="Clifton S.W."/>
            <person name="Wilson R.K."/>
            <person name="Knight R.D."/>
            <person name="Gordon J.I."/>
        </authorList>
    </citation>
    <scope>NUCLEOTIDE SEQUENCE [LARGE SCALE GENOMIC DNA]</scope>
    <source>
        <strain>ATCC 8503 / DSM 20701 / CIP 104284 / JCM 5825 / NCTC 11152</strain>
    </source>
</reference>
<sequence length="173" mass="19516">MKRVFLVGYMGAGKTTVGKELAKLAGLSFIDLDYYIEGRYHKAVSQIFAERGEEAFREIERNMLHEVAEFEDVLISTGGGAPCFFDNMEFMNASGTTVYLKVSVEELAKRLELCKHTRPVLKGRSGEELRAFIAESLEKRNPFYTKASITFDAEKMLTESDVHDISNALMKIL</sequence>
<proteinExistence type="inferred from homology"/>
<name>AROK_PARD8</name>